<feature type="chain" id="PRO_0000257049" description="Probable transcriptional regulatory protein CPF_2210">
    <location>
        <begin position="1"/>
        <end position="245"/>
    </location>
</feature>
<sequence>MSGHSKWHNIQAKKGKMDAKRGKIFTKIGKEIAVAVKEGGANLDGNSRLKDAVAKAKAANMPNDNIQRAIKKAAGEGDSVNYESIVYEGYGPSGVAVMVEVLTDNKNRSAGNVRSAFTKGGGNMGTSGCVGFMFQKKGEIVIEKAELDEDEIMMMALDAGAEDFASEEEVFIVTTSPEDFGTVREALEAEGLEFLEAAVKMIPDTETAINEDDAKKFQKMLDLLEDDDDVQEVYHNAEFPEGWDE</sequence>
<evidence type="ECO:0000255" key="1">
    <source>
        <dbReference type="HAMAP-Rule" id="MF_00693"/>
    </source>
</evidence>
<gene>
    <name type="ordered locus">CPF_2210</name>
</gene>
<proteinExistence type="inferred from homology"/>
<dbReference type="EMBL" id="CP000246">
    <property type="protein sequence ID" value="ABG82611.1"/>
    <property type="molecule type" value="Genomic_DNA"/>
</dbReference>
<dbReference type="RefSeq" id="WP_003451771.1">
    <property type="nucleotide sequence ID" value="NC_008261.1"/>
</dbReference>
<dbReference type="SMR" id="Q0TP06"/>
<dbReference type="STRING" id="195103.CPF_2210"/>
<dbReference type="PaxDb" id="195103-CPF_2210"/>
<dbReference type="KEGG" id="cpf:CPF_2210"/>
<dbReference type="eggNOG" id="COG0217">
    <property type="taxonomic scope" value="Bacteria"/>
</dbReference>
<dbReference type="HOGENOM" id="CLU_062974_2_2_9"/>
<dbReference type="Proteomes" id="UP000001823">
    <property type="component" value="Chromosome"/>
</dbReference>
<dbReference type="GO" id="GO:0005829">
    <property type="term" value="C:cytosol"/>
    <property type="evidence" value="ECO:0007669"/>
    <property type="project" value="TreeGrafter"/>
</dbReference>
<dbReference type="GO" id="GO:0003677">
    <property type="term" value="F:DNA binding"/>
    <property type="evidence" value="ECO:0007669"/>
    <property type="project" value="UniProtKB-UniRule"/>
</dbReference>
<dbReference type="GO" id="GO:0006355">
    <property type="term" value="P:regulation of DNA-templated transcription"/>
    <property type="evidence" value="ECO:0007669"/>
    <property type="project" value="UniProtKB-UniRule"/>
</dbReference>
<dbReference type="FunFam" id="1.10.10.200:FF:000002">
    <property type="entry name" value="Probable transcriptional regulatory protein CLM62_37755"/>
    <property type="match status" value="1"/>
</dbReference>
<dbReference type="FunFam" id="3.30.70.980:FF:000002">
    <property type="entry name" value="Probable transcriptional regulatory protein YebC"/>
    <property type="match status" value="1"/>
</dbReference>
<dbReference type="Gene3D" id="1.10.10.200">
    <property type="match status" value="1"/>
</dbReference>
<dbReference type="Gene3D" id="3.30.70.980">
    <property type="match status" value="2"/>
</dbReference>
<dbReference type="HAMAP" id="MF_00693">
    <property type="entry name" value="Transcrip_reg_TACO1"/>
    <property type="match status" value="1"/>
</dbReference>
<dbReference type="InterPro" id="IPR017856">
    <property type="entry name" value="Integrase-like_N"/>
</dbReference>
<dbReference type="InterPro" id="IPR048300">
    <property type="entry name" value="TACO1_YebC-like_2nd/3rd_dom"/>
</dbReference>
<dbReference type="InterPro" id="IPR049083">
    <property type="entry name" value="TACO1_YebC_N"/>
</dbReference>
<dbReference type="InterPro" id="IPR002876">
    <property type="entry name" value="Transcrip_reg_TACO1-like"/>
</dbReference>
<dbReference type="InterPro" id="IPR026564">
    <property type="entry name" value="Transcrip_reg_TACO1-like_dom3"/>
</dbReference>
<dbReference type="InterPro" id="IPR029072">
    <property type="entry name" value="YebC-like"/>
</dbReference>
<dbReference type="NCBIfam" id="NF001030">
    <property type="entry name" value="PRK00110.1"/>
    <property type="match status" value="1"/>
</dbReference>
<dbReference type="NCBIfam" id="NF009044">
    <property type="entry name" value="PRK12378.1"/>
    <property type="match status" value="1"/>
</dbReference>
<dbReference type="NCBIfam" id="TIGR01033">
    <property type="entry name" value="YebC/PmpR family DNA-binding transcriptional regulator"/>
    <property type="match status" value="1"/>
</dbReference>
<dbReference type="PANTHER" id="PTHR12532:SF6">
    <property type="entry name" value="TRANSCRIPTIONAL REGULATORY PROTEIN YEBC-RELATED"/>
    <property type="match status" value="1"/>
</dbReference>
<dbReference type="PANTHER" id="PTHR12532">
    <property type="entry name" value="TRANSLATIONAL ACTIVATOR OF CYTOCHROME C OXIDASE 1"/>
    <property type="match status" value="1"/>
</dbReference>
<dbReference type="Pfam" id="PF20772">
    <property type="entry name" value="TACO1_YebC_N"/>
    <property type="match status" value="1"/>
</dbReference>
<dbReference type="Pfam" id="PF01709">
    <property type="entry name" value="Transcrip_reg"/>
    <property type="match status" value="1"/>
</dbReference>
<dbReference type="SUPFAM" id="SSF75625">
    <property type="entry name" value="YebC-like"/>
    <property type="match status" value="1"/>
</dbReference>
<keyword id="KW-0963">Cytoplasm</keyword>
<keyword id="KW-0238">DNA-binding</keyword>
<keyword id="KW-0804">Transcription</keyword>
<keyword id="KW-0805">Transcription regulation</keyword>
<organism>
    <name type="scientific">Clostridium perfringens (strain ATCC 13124 / DSM 756 / JCM 1290 / NCIMB 6125 / NCTC 8237 / Type A)</name>
    <dbReference type="NCBI Taxonomy" id="195103"/>
    <lineage>
        <taxon>Bacteria</taxon>
        <taxon>Bacillati</taxon>
        <taxon>Bacillota</taxon>
        <taxon>Clostridia</taxon>
        <taxon>Eubacteriales</taxon>
        <taxon>Clostridiaceae</taxon>
        <taxon>Clostridium</taxon>
    </lineage>
</organism>
<comment type="subcellular location">
    <subcellularLocation>
        <location evidence="1">Cytoplasm</location>
    </subcellularLocation>
</comment>
<comment type="similarity">
    <text evidence="1">Belongs to the TACO1 family.</text>
</comment>
<accession>Q0TP06</accession>
<protein>
    <recommendedName>
        <fullName evidence="1">Probable transcriptional regulatory protein CPF_2210</fullName>
    </recommendedName>
</protein>
<reference key="1">
    <citation type="journal article" date="2006" name="Genome Res.">
        <title>Skewed genomic variability in strains of the toxigenic bacterial pathogen, Clostridium perfringens.</title>
        <authorList>
            <person name="Myers G.S.A."/>
            <person name="Rasko D.A."/>
            <person name="Cheung J.K."/>
            <person name="Ravel J."/>
            <person name="Seshadri R."/>
            <person name="DeBoy R.T."/>
            <person name="Ren Q."/>
            <person name="Varga J."/>
            <person name="Awad M.M."/>
            <person name="Brinkac L.M."/>
            <person name="Daugherty S.C."/>
            <person name="Haft D.H."/>
            <person name="Dodson R.J."/>
            <person name="Madupu R."/>
            <person name="Nelson W.C."/>
            <person name="Rosovitz M.J."/>
            <person name="Sullivan S.A."/>
            <person name="Khouri H."/>
            <person name="Dimitrov G.I."/>
            <person name="Watkins K.L."/>
            <person name="Mulligan S."/>
            <person name="Benton J."/>
            <person name="Radune D."/>
            <person name="Fisher D.J."/>
            <person name="Atkins H.S."/>
            <person name="Hiscox T."/>
            <person name="Jost B.H."/>
            <person name="Billington S.J."/>
            <person name="Songer J.G."/>
            <person name="McClane B.A."/>
            <person name="Titball R.W."/>
            <person name="Rood J.I."/>
            <person name="Melville S.B."/>
            <person name="Paulsen I.T."/>
        </authorList>
    </citation>
    <scope>NUCLEOTIDE SEQUENCE [LARGE SCALE GENOMIC DNA]</scope>
    <source>
        <strain>ATCC 13124 / DSM 756 / JCM 1290 / NCIMB 6125 / NCTC 8237 / S 107 / Type A</strain>
    </source>
</reference>
<name>Y2210_CLOP1</name>